<feature type="chain" id="PRO_0000238335" description="ATP synthase subunit alpha">
    <location>
        <begin position="1"/>
        <end position="513"/>
    </location>
</feature>
<feature type="binding site" evidence="1">
    <location>
        <begin position="169"/>
        <end position="176"/>
    </location>
    <ligand>
        <name>ATP</name>
        <dbReference type="ChEBI" id="CHEBI:30616"/>
    </ligand>
</feature>
<feature type="site" description="Required for activity" evidence="1">
    <location>
        <position position="373"/>
    </location>
</feature>
<name>ATPA_CUPPJ</name>
<organism>
    <name type="scientific">Cupriavidus pinatubonensis (strain JMP 134 / LMG 1197)</name>
    <name type="common">Cupriavidus necator (strain JMP 134)</name>
    <dbReference type="NCBI Taxonomy" id="264198"/>
    <lineage>
        <taxon>Bacteria</taxon>
        <taxon>Pseudomonadati</taxon>
        <taxon>Pseudomonadota</taxon>
        <taxon>Betaproteobacteria</taxon>
        <taxon>Burkholderiales</taxon>
        <taxon>Burkholderiaceae</taxon>
        <taxon>Cupriavidus</taxon>
    </lineage>
</organism>
<accession>Q46VX8</accession>
<protein>
    <recommendedName>
        <fullName evidence="1">ATP synthase subunit alpha</fullName>
        <ecNumber evidence="1">7.1.2.2</ecNumber>
    </recommendedName>
    <alternativeName>
        <fullName evidence="1">ATP synthase F1 sector subunit alpha</fullName>
    </alternativeName>
    <alternativeName>
        <fullName evidence="1">F-ATPase subunit alpha</fullName>
    </alternativeName>
</protein>
<gene>
    <name evidence="1" type="primary">atpA</name>
    <name type="ordered locus">Reut_A3348</name>
</gene>
<comment type="function">
    <text evidence="1">Produces ATP from ADP in the presence of a proton gradient across the membrane. The alpha chain is a regulatory subunit.</text>
</comment>
<comment type="catalytic activity">
    <reaction evidence="1">
        <text>ATP + H2O + 4 H(+)(in) = ADP + phosphate + 5 H(+)(out)</text>
        <dbReference type="Rhea" id="RHEA:57720"/>
        <dbReference type="ChEBI" id="CHEBI:15377"/>
        <dbReference type="ChEBI" id="CHEBI:15378"/>
        <dbReference type="ChEBI" id="CHEBI:30616"/>
        <dbReference type="ChEBI" id="CHEBI:43474"/>
        <dbReference type="ChEBI" id="CHEBI:456216"/>
        <dbReference type="EC" id="7.1.2.2"/>
    </reaction>
</comment>
<comment type="subunit">
    <text evidence="1">F-type ATPases have 2 components, CF(1) - the catalytic core - and CF(0) - the membrane proton channel. CF(1) has five subunits: alpha(3), beta(3), gamma(1), delta(1), epsilon(1). CF(0) has three main subunits: a(1), b(2) and c(9-12). The alpha and beta chains form an alternating ring which encloses part of the gamma chain. CF(1) is attached to CF(0) by a central stalk formed by the gamma and epsilon chains, while a peripheral stalk is formed by the delta and b chains.</text>
</comment>
<comment type="subcellular location">
    <subcellularLocation>
        <location evidence="1">Cell inner membrane</location>
        <topology evidence="1">Peripheral membrane protein</topology>
    </subcellularLocation>
</comment>
<comment type="similarity">
    <text evidence="1">Belongs to the ATPase alpha/beta chains family.</text>
</comment>
<keyword id="KW-0066">ATP synthesis</keyword>
<keyword id="KW-0067">ATP-binding</keyword>
<keyword id="KW-0997">Cell inner membrane</keyword>
<keyword id="KW-1003">Cell membrane</keyword>
<keyword id="KW-0139">CF(1)</keyword>
<keyword id="KW-0375">Hydrogen ion transport</keyword>
<keyword id="KW-0406">Ion transport</keyword>
<keyword id="KW-0472">Membrane</keyword>
<keyword id="KW-0547">Nucleotide-binding</keyword>
<keyword id="KW-1278">Translocase</keyword>
<keyword id="KW-0813">Transport</keyword>
<reference key="1">
    <citation type="journal article" date="2010" name="PLoS ONE">
        <title>The complete multipartite genome sequence of Cupriavidus necator JMP134, a versatile pollutant degrader.</title>
        <authorList>
            <person name="Lykidis A."/>
            <person name="Perez-Pantoja D."/>
            <person name="Ledger T."/>
            <person name="Mavromatis K."/>
            <person name="Anderson I.J."/>
            <person name="Ivanova N.N."/>
            <person name="Hooper S.D."/>
            <person name="Lapidus A."/>
            <person name="Lucas S."/>
            <person name="Gonzalez B."/>
            <person name="Kyrpides N.C."/>
        </authorList>
    </citation>
    <scope>NUCLEOTIDE SEQUENCE [LARGE SCALE GENOMIC DNA]</scope>
    <source>
        <strain>JMP134 / LMG 1197</strain>
    </source>
</reference>
<evidence type="ECO:0000255" key="1">
    <source>
        <dbReference type="HAMAP-Rule" id="MF_01346"/>
    </source>
</evidence>
<proteinExistence type="inferred from homology"/>
<dbReference type="EC" id="7.1.2.2" evidence="1"/>
<dbReference type="EMBL" id="CP000090">
    <property type="protein sequence ID" value="AAZ62706.1"/>
    <property type="molecule type" value="Genomic_DNA"/>
</dbReference>
<dbReference type="SMR" id="Q46VX8"/>
<dbReference type="STRING" id="264198.Reut_A3348"/>
<dbReference type="KEGG" id="reu:Reut_A3348"/>
<dbReference type="eggNOG" id="COG0056">
    <property type="taxonomic scope" value="Bacteria"/>
</dbReference>
<dbReference type="HOGENOM" id="CLU_010091_2_1_4"/>
<dbReference type="OrthoDB" id="9803053at2"/>
<dbReference type="GO" id="GO:0005886">
    <property type="term" value="C:plasma membrane"/>
    <property type="evidence" value="ECO:0007669"/>
    <property type="project" value="UniProtKB-SubCell"/>
</dbReference>
<dbReference type="GO" id="GO:0045259">
    <property type="term" value="C:proton-transporting ATP synthase complex"/>
    <property type="evidence" value="ECO:0007669"/>
    <property type="project" value="UniProtKB-KW"/>
</dbReference>
<dbReference type="GO" id="GO:0043531">
    <property type="term" value="F:ADP binding"/>
    <property type="evidence" value="ECO:0007669"/>
    <property type="project" value="TreeGrafter"/>
</dbReference>
<dbReference type="GO" id="GO:0005524">
    <property type="term" value="F:ATP binding"/>
    <property type="evidence" value="ECO:0007669"/>
    <property type="project" value="UniProtKB-UniRule"/>
</dbReference>
<dbReference type="GO" id="GO:0046933">
    <property type="term" value="F:proton-transporting ATP synthase activity, rotational mechanism"/>
    <property type="evidence" value="ECO:0007669"/>
    <property type="project" value="UniProtKB-UniRule"/>
</dbReference>
<dbReference type="CDD" id="cd18113">
    <property type="entry name" value="ATP-synt_F1_alpha_C"/>
    <property type="match status" value="1"/>
</dbReference>
<dbReference type="CDD" id="cd18116">
    <property type="entry name" value="ATP-synt_F1_alpha_N"/>
    <property type="match status" value="1"/>
</dbReference>
<dbReference type="CDD" id="cd01132">
    <property type="entry name" value="F1-ATPase_alpha_CD"/>
    <property type="match status" value="1"/>
</dbReference>
<dbReference type="FunFam" id="1.20.150.20:FF:000001">
    <property type="entry name" value="ATP synthase subunit alpha"/>
    <property type="match status" value="1"/>
</dbReference>
<dbReference type="FunFam" id="2.40.30.20:FF:000001">
    <property type="entry name" value="ATP synthase subunit alpha"/>
    <property type="match status" value="1"/>
</dbReference>
<dbReference type="FunFam" id="3.40.50.300:FF:000002">
    <property type="entry name" value="ATP synthase subunit alpha"/>
    <property type="match status" value="1"/>
</dbReference>
<dbReference type="Gene3D" id="2.40.30.20">
    <property type="match status" value="1"/>
</dbReference>
<dbReference type="Gene3D" id="1.20.150.20">
    <property type="entry name" value="ATP synthase alpha/beta chain, C-terminal domain"/>
    <property type="match status" value="1"/>
</dbReference>
<dbReference type="Gene3D" id="3.40.50.300">
    <property type="entry name" value="P-loop containing nucleotide triphosphate hydrolases"/>
    <property type="match status" value="1"/>
</dbReference>
<dbReference type="HAMAP" id="MF_01346">
    <property type="entry name" value="ATP_synth_alpha_bact"/>
    <property type="match status" value="1"/>
</dbReference>
<dbReference type="InterPro" id="IPR023366">
    <property type="entry name" value="ATP_synth_asu-like_sf"/>
</dbReference>
<dbReference type="InterPro" id="IPR000793">
    <property type="entry name" value="ATP_synth_asu_C"/>
</dbReference>
<dbReference type="InterPro" id="IPR038376">
    <property type="entry name" value="ATP_synth_asu_C_sf"/>
</dbReference>
<dbReference type="InterPro" id="IPR033732">
    <property type="entry name" value="ATP_synth_F1_a_nt-bd_dom"/>
</dbReference>
<dbReference type="InterPro" id="IPR005294">
    <property type="entry name" value="ATP_synth_F1_asu"/>
</dbReference>
<dbReference type="InterPro" id="IPR020003">
    <property type="entry name" value="ATPase_a/bsu_AS"/>
</dbReference>
<dbReference type="InterPro" id="IPR004100">
    <property type="entry name" value="ATPase_F1/V1/A1_a/bsu_N"/>
</dbReference>
<dbReference type="InterPro" id="IPR036121">
    <property type="entry name" value="ATPase_F1/V1/A1_a/bsu_N_sf"/>
</dbReference>
<dbReference type="InterPro" id="IPR000194">
    <property type="entry name" value="ATPase_F1/V1/A1_a/bsu_nucl-bd"/>
</dbReference>
<dbReference type="InterPro" id="IPR027417">
    <property type="entry name" value="P-loop_NTPase"/>
</dbReference>
<dbReference type="NCBIfam" id="TIGR00962">
    <property type="entry name" value="atpA"/>
    <property type="match status" value="1"/>
</dbReference>
<dbReference type="NCBIfam" id="NF009884">
    <property type="entry name" value="PRK13343.1"/>
    <property type="match status" value="1"/>
</dbReference>
<dbReference type="PANTHER" id="PTHR48082">
    <property type="entry name" value="ATP SYNTHASE SUBUNIT ALPHA, MITOCHONDRIAL"/>
    <property type="match status" value="1"/>
</dbReference>
<dbReference type="PANTHER" id="PTHR48082:SF2">
    <property type="entry name" value="ATP SYNTHASE SUBUNIT ALPHA, MITOCHONDRIAL"/>
    <property type="match status" value="1"/>
</dbReference>
<dbReference type="Pfam" id="PF00006">
    <property type="entry name" value="ATP-synt_ab"/>
    <property type="match status" value="1"/>
</dbReference>
<dbReference type="Pfam" id="PF00306">
    <property type="entry name" value="ATP-synt_ab_C"/>
    <property type="match status" value="1"/>
</dbReference>
<dbReference type="Pfam" id="PF02874">
    <property type="entry name" value="ATP-synt_ab_N"/>
    <property type="match status" value="1"/>
</dbReference>
<dbReference type="PIRSF" id="PIRSF039088">
    <property type="entry name" value="F_ATPase_subunit_alpha"/>
    <property type="match status" value="1"/>
</dbReference>
<dbReference type="SUPFAM" id="SSF47917">
    <property type="entry name" value="C-terminal domain of alpha and beta subunits of F1 ATP synthase"/>
    <property type="match status" value="1"/>
</dbReference>
<dbReference type="SUPFAM" id="SSF50615">
    <property type="entry name" value="N-terminal domain of alpha and beta subunits of F1 ATP synthase"/>
    <property type="match status" value="1"/>
</dbReference>
<dbReference type="SUPFAM" id="SSF52540">
    <property type="entry name" value="P-loop containing nucleoside triphosphate hydrolases"/>
    <property type="match status" value="1"/>
</dbReference>
<dbReference type="PROSITE" id="PS00152">
    <property type="entry name" value="ATPASE_ALPHA_BETA"/>
    <property type="match status" value="1"/>
</dbReference>
<sequence length="513" mass="55509">MQLNPSEISELIKSRISGLGADAEVRNTGTVISVTDGICRVHGLSGVMQGEMLEFPGNTFGLALNLERDSVGAVVLGDYEHISEGDTVKCTGRILEVPVGKELLGRVVNTLGQPIDGKGPINAKETDVIEKVAPGVIARQSVSQPVQTGLKSIDSMVPIGRGQRELIIGDRQTGKTAVAVDAIINQKGKGIFCVYVAIGQKASTIANVVRKLEEHGAMEYTVVVAAAASDSAAMQYLAAYAGCTMGEYFRDRGEDALIVYDDLTKQAWAYRQVSLLLRRPPGREAYPGDVFYLHSRLLERAARVNEEYVENFTKGAVKGKTGSLTALPIIETQAGDVSAFVPTNVISITDGQIFLETDLFNAGIRPAINAGISVSRVGGAAQTKVVKNLSGGIRTDLAQYRELAAFAQFASDLDDATRKQLERGRRVTELLKQAQYQPQQVWQLAASLFAANNGFLDNVEVKDILPFEKGLHDHLKTKYADLVNRIEETKVLSKEDEPALRAAIEDFRKSAAF</sequence>